<sequence>MKTLLLTLVVVTIVCLDLGYTKTCLISPSSTPQTCPQGQDTCFLKALCDKLCPIRGPVIEQGCAATCPEFRSNYRSLLCCTTDNCNH</sequence>
<feature type="signal peptide" evidence="1">
    <location>
        <begin position="1"/>
        <end position="21"/>
    </location>
</feature>
<feature type="chain" id="PRO_0000035414" description="Kappa-5-bungarotoxin">
    <location>
        <begin position="22"/>
        <end position="87"/>
    </location>
</feature>
<feature type="disulfide bond" evidence="2">
    <location>
        <begin position="24"/>
        <end position="42"/>
    </location>
</feature>
<feature type="disulfide bond" evidence="2">
    <location>
        <begin position="35"/>
        <end position="63"/>
    </location>
</feature>
<feature type="disulfide bond" evidence="2">
    <location>
        <begin position="48"/>
        <end position="52"/>
    </location>
</feature>
<feature type="disulfide bond" evidence="2">
    <location>
        <begin position="67"/>
        <end position="79"/>
    </location>
</feature>
<feature type="disulfide bond" evidence="2">
    <location>
        <begin position="80"/>
        <end position="85"/>
    </location>
</feature>
<proteinExistence type="inferred from homology"/>
<organism>
    <name type="scientific">Bungarus multicinctus</name>
    <name type="common">Many-banded krait</name>
    <dbReference type="NCBI Taxonomy" id="8616"/>
    <lineage>
        <taxon>Eukaryota</taxon>
        <taxon>Metazoa</taxon>
        <taxon>Chordata</taxon>
        <taxon>Craniata</taxon>
        <taxon>Vertebrata</taxon>
        <taxon>Euteleostomi</taxon>
        <taxon>Lepidosauria</taxon>
        <taxon>Squamata</taxon>
        <taxon>Bifurcata</taxon>
        <taxon>Unidentata</taxon>
        <taxon>Episquamata</taxon>
        <taxon>Toxicofera</taxon>
        <taxon>Serpentes</taxon>
        <taxon>Colubroidea</taxon>
        <taxon>Elapidae</taxon>
        <taxon>Bungarinae</taxon>
        <taxon>Bungarus</taxon>
    </lineage>
</organism>
<protein>
    <recommendedName>
        <fullName>Kappa-5-bungarotoxin</fullName>
    </recommendedName>
</protein>
<keyword id="KW-0008">Acetylcholine receptor inhibiting toxin</keyword>
<keyword id="KW-1015">Disulfide bond</keyword>
<keyword id="KW-0872">Ion channel impairing toxin</keyword>
<keyword id="KW-0528">Neurotoxin</keyword>
<keyword id="KW-0629">Postsynaptic neurotoxin</keyword>
<keyword id="KW-0964">Secreted</keyword>
<keyword id="KW-0732">Signal</keyword>
<keyword id="KW-0800">Toxin</keyword>
<accession>O12962</accession>
<evidence type="ECO:0000250" key="1"/>
<evidence type="ECO:0000250" key="2">
    <source>
        <dbReference type="UniProtKB" id="P01398"/>
    </source>
</evidence>
<evidence type="ECO:0000250" key="3">
    <source>
        <dbReference type="UniProtKB" id="P15816"/>
    </source>
</evidence>
<evidence type="ECO:0000305" key="4"/>
<reference key="1">
    <citation type="submission" date="1997-04" db="EMBL/GenBank/DDBJ databases">
        <authorList>
            <person name="Chang L.-S."/>
            <person name="Lin J."/>
        </authorList>
    </citation>
    <scope>NUCLEOTIDE SEQUENCE [MRNA]</scope>
    <source>
        <tissue>Venom gland</tissue>
    </source>
</reference>
<name>3LK5_BUNMU</name>
<dbReference type="EMBL" id="Y12266">
    <property type="protein sequence ID" value="CAA72940.1"/>
    <property type="molecule type" value="mRNA"/>
</dbReference>
<dbReference type="SMR" id="O12962"/>
<dbReference type="GO" id="GO:0005576">
    <property type="term" value="C:extracellular region"/>
    <property type="evidence" value="ECO:0007669"/>
    <property type="project" value="UniProtKB-SubCell"/>
</dbReference>
<dbReference type="GO" id="GO:0030550">
    <property type="term" value="F:acetylcholine receptor inhibitor activity"/>
    <property type="evidence" value="ECO:0007669"/>
    <property type="project" value="UniProtKB-KW"/>
</dbReference>
<dbReference type="GO" id="GO:0099106">
    <property type="term" value="F:ion channel regulator activity"/>
    <property type="evidence" value="ECO:0007669"/>
    <property type="project" value="UniProtKB-KW"/>
</dbReference>
<dbReference type="GO" id="GO:0090729">
    <property type="term" value="F:toxin activity"/>
    <property type="evidence" value="ECO:0007669"/>
    <property type="project" value="UniProtKB-KW"/>
</dbReference>
<dbReference type="CDD" id="cd00206">
    <property type="entry name" value="TFP_snake_toxin"/>
    <property type="match status" value="1"/>
</dbReference>
<dbReference type="Gene3D" id="2.10.60.10">
    <property type="entry name" value="CD59"/>
    <property type="match status" value="1"/>
</dbReference>
<dbReference type="InterPro" id="IPR003571">
    <property type="entry name" value="Snake_3FTx"/>
</dbReference>
<dbReference type="InterPro" id="IPR045860">
    <property type="entry name" value="Snake_toxin-like_sf"/>
</dbReference>
<dbReference type="InterPro" id="IPR018354">
    <property type="entry name" value="Snake_toxin_con_site"/>
</dbReference>
<dbReference type="InterPro" id="IPR054131">
    <property type="entry name" value="Toxin_cobra-type"/>
</dbReference>
<dbReference type="Pfam" id="PF21947">
    <property type="entry name" value="Toxin_cobra-type"/>
    <property type="match status" value="1"/>
</dbReference>
<dbReference type="SUPFAM" id="SSF57302">
    <property type="entry name" value="Snake toxin-like"/>
    <property type="match status" value="1"/>
</dbReference>
<dbReference type="PROSITE" id="PS00272">
    <property type="entry name" value="SNAKE_TOXIN"/>
    <property type="match status" value="1"/>
</dbReference>
<comment type="function">
    <text evidence="2">Postsynaptic neurotoxin that binds and inhibits neuronal nicotinic acetylcholine receptors (nAChR) with high affinity (IC(50)&lt;100 nM). Is a selective, and slowly reversible antagonist of alpha-3/CHRNA3-containing and some alpha-4/CHRNA4-containing AChRs.</text>
</comment>
<comment type="subunit">
    <text evidence="3">Homo- and heterodimer; non-covalently linked.</text>
</comment>
<comment type="subcellular location">
    <subcellularLocation>
        <location evidence="1">Secreted</location>
    </subcellularLocation>
</comment>
<comment type="tissue specificity">
    <text evidence="4">Expressed by the venom gland.</text>
</comment>
<comment type="similarity">
    <text evidence="4">Belongs to the three-finger toxin family. Long-chain subfamily. Kappa-neurotoxin sub-subfamily.</text>
</comment>